<accession>P56382</accession>
<organism>
    <name type="scientific">Mus musculus</name>
    <name type="common">Mouse</name>
    <dbReference type="NCBI Taxonomy" id="10090"/>
    <lineage>
        <taxon>Eukaryota</taxon>
        <taxon>Metazoa</taxon>
        <taxon>Chordata</taxon>
        <taxon>Craniata</taxon>
        <taxon>Vertebrata</taxon>
        <taxon>Euteleostomi</taxon>
        <taxon>Mammalia</taxon>
        <taxon>Eutheria</taxon>
        <taxon>Euarchontoglires</taxon>
        <taxon>Glires</taxon>
        <taxon>Rodentia</taxon>
        <taxon>Myomorpha</taxon>
        <taxon>Muroidea</taxon>
        <taxon>Muridae</taxon>
        <taxon>Murinae</taxon>
        <taxon>Mus</taxon>
        <taxon>Mus</taxon>
    </lineage>
</organism>
<reference key="1">
    <citation type="journal article" date="2004" name="Genome Res.">
        <title>The status, quality, and expansion of the NIH full-length cDNA project: the Mammalian Gene Collection (MGC).</title>
        <authorList>
            <consortium name="The MGC Project Team"/>
        </authorList>
    </citation>
    <scope>NUCLEOTIDE SEQUENCE [LARGE SCALE MRNA]</scope>
    <source>
        <strain>FVB/N</strain>
        <tissue>Colon</tissue>
    </source>
</reference>
<reference key="2">
    <citation type="journal article" date="2013" name="Mol. Cell">
        <title>SIRT5-mediated lysine desuccinylation impacts diverse metabolic pathways.</title>
        <authorList>
            <person name="Park J."/>
            <person name="Chen Y."/>
            <person name="Tishkoff D.X."/>
            <person name="Peng C."/>
            <person name="Tan M."/>
            <person name="Dai L."/>
            <person name="Xie Z."/>
            <person name="Zhang Y."/>
            <person name="Zwaans B.M."/>
            <person name="Skinner M.E."/>
            <person name="Lombard D.B."/>
            <person name="Zhao Y."/>
        </authorList>
    </citation>
    <scope>SUCCINYLATION [LARGE SCALE ANALYSIS] AT LYS-21; LYS-32 AND LYS-37</scope>
    <scope>IDENTIFICATION BY MASS SPECTROMETRY [LARGE SCALE ANALYSIS]</scope>
    <source>
        <tissue>Embryonic fibroblast</tissue>
        <tissue>Liver</tissue>
    </source>
</reference>
<reference key="3">
    <citation type="journal article" date="2013" name="Proc. Natl. Acad. Sci. U.S.A.">
        <title>Label-free quantitative proteomics of the lysine acetylome in mitochondria identifies substrates of SIRT3 in metabolic pathways.</title>
        <authorList>
            <person name="Rardin M.J."/>
            <person name="Newman J.C."/>
            <person name="Held J.M."/>
            <person name="Cusack M.P."/>
            <person name="Sorensen D.J."/>
            <person name="Li B."/>
            <person name="Schilling B."/>
            <person name="Mooney S.D."/>
            <person name="Kahn C.R."/>
            <person name="Verdin E."/>
            <person name="Gibson B.W."/>
        </authorList>
    </citation>
    <scope>ACETYLATION [LARGE SCALE ANALYSIS] AT LYS-21; LYS-32; LYS-37 AND LYS-44</scope>
    <scope>IDENTIFICATION BY MASS SPECTROMETRY [LARGE SCALE ANALYSIS]</scope>
    <source>
        <tissue>Liver</tissue>
    </source>
</reference>
<gene>
    <name evidence="2" type="primary">Atp5f1e</name>
    <name type="synonym">Atp5e</name>
</gene>
<sequence>MVAYWRQAGLSYIRFSQICAKAVRDALKTEFKANAEKTSGSSIKIVKVSKKE</sequence>
<feature type="chain" id="PRO_0000071663" description="ATP synthase F(1) complex subunit epsilon, mitochondrial">
    <location>
        <begin position="1"/>
        <end position="52"/>
    </location>
</feature>
<feature type="modified residue" description="N6-acetyllysine; alternate" evidence="4">
    <location>
        <position position="21"/>
    </location>
</feature>
<feature type="modified residue" description="N6-succinyllysine; alternate" evidence="5">
    <location>
        <position position="21"/>
    </location>
</feature>
<feature type="modified residue" description="N6-acetyllysine; alternate" evidence="4">
    <location>
        <position position="32"/>
    </location>
</feature>
<feature type="modified residue" description="N6-succinyllysine; alternate" evidence="5">
    <location>
        <position position="32"/>
    </location>
</feature>
<feature type="modified residue" description="N6-acetyllysine; alternate" evidence="4">
    <location>
        <position position="37"/>
    </location>
</feature>
<feature type="modified residue" description="N6-succinyllysine; alternate" evidence="5">
    <location>
        <position position="37"/>
    </location>
</feature>
<feature type="modified residue" description="N6-acetyllysine" evidence="4">
    <location>
        <position position="44"/>
    </location>
</feature>
<dbReference type="EMBL" id="BC024339">
    <property type="protein sequence ID" value="AAH24339.1"/>
    <property type="molecule type" value="mRNA"/>
</dbReference>
<dbReference type="CCDS" id="CCDS38360.1"/>
<dbReference type="RefSeq" id="NP_080259.1">
    <property type="nucleotide sequence ID" value="NM_025983.3"/>
</dbReference>
<dbReference type="SMR" id="P56382"/>
<dbReference type="BioGRID" id="211960">
    <property type="interactions" value="49"/>
</dbReference>
<dbReference type="FunCoup" id="P56382">
    <property type="interactions" value="347"/>
</dbReference>
<dbReference type="STRING" id="10090.ENSMUSP00000016396"/>
<dbReference type="GlyGen" id="P56382">
    <property type="glycosylation" value="1 site, 1 O-linked glycan (1 site)"/>
</dbReference>
<dbReference type="iPTMnet" id="P56382"/>
<dbReference type="PhosphoSitePlus" id="P56382"/>
<dbReference type="SwissPalm" id="P56382"/>
<dbReference type="jPOST" id="P56382"/>
<dbReference type="PaxDb" id="10090-ENSMUSP00000016396"/>
<dbReference type="PeptideAtlas" id="P56382"/>
<dbReference type="ProteomicsDB" id="277130"/>
<dbReference type="Pumba" id="P56382"/>
<dbReference type="TopDownProteomics" id="P56382"/>
<dbReference type="Antibodypedia" id="29273">
    <property type="antibodies" value="154 antibodies from 20 providers"/>
</dbReference>
<dbReference type="DNASU" id="67126"/>
<dbReference type="Ensembl" id="ENSMUST00000016396.8">
    <property type="protein sequence ID" value="ENSMUSP00000016396.8"/>
    <property type="gene ID" value="ENSMUSG00000016252.8"/>
</dbReference>
<dbReference type="GeneID" id="67126"/>
<dbReference type="KEGG" id="mmu:67126"/>
<dbReference type="UCSC" id="uc008off.1">
    <property type="organism name" value="mouse"/>
</dbReference>
<dbReference type="AGR" id="MGI:1855697"/>
<dbReference type="CTD" id="514"/>
<dbReference type="MGI" id="MGI:1855697">
    <property type="gene designation" value="Atp5f1e"/>
</dbReference>
<dbReference type="VEuPathDB" id="HostDB:ENSMUSG00000016252"/>
<dbReference type="eggNOG" id="KOG3495">
    <property type="taxonomic scope" value="Eukaryota"/>
</dbReference>
<dbReference type="GeneTree" id="ENSGT00390000015470"/>
<dbReference type="HOGENOM" id="CLU_187039_4_0_1"/>
<dbReference type="InParanoid" id="P56382"/>
<dbReference type="OMA" id="QICAQVV"/>
<dbReference type="OrthoDB" id="269124at2759"/>
<dbReference type="PhylomeDB" id="P56382"/>
<dbReference type="TreeFam" id="TF300278"/>
<dbReference type="Reactome" id="R-MMU-163210">
    <property type="pathway name" value="Formation of ATP by chemiosmotic coupling"/>
</dbReference>
<dbReference type="Reactome" id="R-MMU-8949613">
    <property type="pathway name" value="Cristae formation"/>
</dbReference>
<dbReference type="BioGRID-ORCS" id="67126">
    <property type="hits" value="17 hits in 73 CRISPR screens"/>
</dbReference>
<dbReference type="ChiTaRS" id="Atp5e">
    <property type="organism name" value="mouse"/>
</dbReference>
<dbReference type="PRO" id="PR:P56382"/>
<dbReference type="Proteomes" id="UP000000589">
    <property type="component" value="Chromosome 2"/>
</dbReference>
<dbReference type="RNAct" id="P56382">
    <property type="molecule type" value="protein"/>
</dbReference>
<dbReference type="Bgee" id="ENSMUSG00000016252">
    <property type="expression patterns" value="Expressed in hindlimb stylopod muscle and 265 other cell types or tissues"/>
</dbReference>
<dbReference type="ExpressionAtlas" id="P56382">
    <property type="expression patterns" value="baseline and differential"/>
</dbReference>
<dbReference type="GO" id="GO:0005743">
    <property type="term" value="C:mitochondrial inner membrane"/>
    <property type="evidence" value="ECO:0007005"/>
    <property type="project" value="MGI"/>
</dbReference>
<dbReference type="GO" id="GO:0005739">
    <property type="term" value="C:mitochondrion"/>
    <property type="evidence" value="ECO:0007005"/>
    <property type="project" value="MGI"/>
</dbReference>
<dbReference type="GO" id="GO:0045259">
    <property type="term" value="C:proton-transporting ATP synthase complex"/>
    <property type="evidence" value="ECO:0000250"/>
    <property type="project" value="UniProtKB"/>
</dbReference>
<dbReference type="GO" id="GO:0008553">
    <property type="term" value="F:P-type proton-exporting transporter activity"/>
    <property type="evidence" value="ECO:0000247"/>
    <property type="project" value="MGI"/>
</dbReference>
<dbReference type="GO" id="GO:0046933">
    <property type="term" value="F:proton-transporting ATP synthase activity, rotational mechanism"/>
    <property type="evidence" value="ECO:0007669"/>
    <property type="project" value="Ensembl"/>
</dbReference>
<dbReference type="GO" id="GO:0015986">
    <property type="term" value="P:proton motive force-driven ATP synthesis"/>
    <property type="evidence" value="ECO:0000247"/>
    <property type="project" value="MGI"/>
</dbReference>
<dbReference type="GO" id="GO:0042776">
    <property type="term" value="P:proton motive force-driven mitochondrial ATP synthesis"/>
    <property type="evidence" value="ECO:0007669"/>
    <property type="project" value="Ensembl"/>
</dbReference>
<dbReference type="CDD" id="cd12153">
    <property type="entry name" value="F1-ATPase_epsilon"/>
    <property type="match status" value="1"/>
</dbReference>
<dbReference type="FunFam" id="1.10.1620.20:FF:000001">
    <property type="entry name" value="ATP synthase subunit epsilon, mitochondrial"/>
    <property type="match status" value="1"/>
</dbReference>
<dbReference type="Gene3D" id="1.10.1620.20">
    <property type="entry name" value="ATP synthase, F1 complex, epsilon subunit superfamily, mitochondrial"/>
    <property type="match status" value="1"/>
</dbReference>
<dbReference type="InterPro" id="IPR006721">
    <property type="entry name" value="ATP_synth_F1_esu_mt"/>
</dbReference>
<dbReference type="InterPro" id="IPR036742">
    <property type="entry name" value="ATP_synth_F1_esu_sf_mt"/>
</dbReference>
<dbReference type="PANTHER" id="PTHR12448">
    <property type="entry name" value="ATP SYNTHASE EPSILON CHAIN, MITOCHONDRIAL"/>
    <property type="match status" value="1"/>
</dbReference>
<dbReference type="PANTHER" id="PTHR12448:SF0">
    <property type="entry name" value="ATP SYNTHASE SUBUNIT EPSILON, MITOCHONDRIAL"/>
    <property type="match status" value="1"/>
</dbReference>
<dbReference type="Pfam" id="PF04627">
    <property type="entry name" value="ATP-synt_Eps"/>
    <property type="match status" value="1"/>
</dbReference>
<dbReference type="SUPFAM" id="SSF48690">
    <property type="entry name" value="Epsilon subunit of mitochondrial F1F0-ATP synthase"/>
    <property type="match status" value="1"/>
</dbReference>
<comment type="function">
    <text evidence="1 2">Subunit epsilon, of the mitochondrial membrane ATP synthase complex (F(1)F(0) ATP synthase or Complex V) that produces ATP from ADP in the presence of a proton gradient across the membrane which is generated by electron transport complexes of the respiratory chain. ATP synthase complex consist of a soluble F(1) head domain - the catalytic core - and a membrane F(1) domain - the membrane proton channel. These two domains are linked by a central stalk rotating inside the F(1) region and a stationary peripheral stalk. During catalysis, ATP synthesis in the catalytic domain of F(1) is coupled via a rotary mechanism of the central stalk subunits to proton translocation (By similarity). In vivo, can only synthesize ATP although its ATP hydrolase activity can be activated artificially in vitro (By similarity). May be essential for the assembly of F(1) and may play an important role in the incorporation of the hydrophobic subunit c into the F(1)-c oligomer rotor of the mitochondrial ATP synthase complex (By similarity).</text>
</comment>
<comment type="subunit">
    <text evidence="2">Component of the ATP synthase complex composed at least of ATP5F1A/subunit alpha, ATP5F1B/subunit beta, ATP5MC1/subunit c (homooctomer), MT-ATP6/subunit a, MT-ATP8/subunit 8, ATP5ME/subunit e, ATP5MF/subunit f, ATP5MG/subunit g, ATP5MK/subunit k, ATP5MJ/subunit j, ATP5F1C/subunit gamma, ATP5F1D/subunit delta, ATP5F1E/subunit epsilon, ATP5PF/subunit F6, ATP5PB/subunit b, ATP5PD/subunit d, ATP5PO/subunit OSCP. ATP synthase complex consists of a soluble F(1) head domain (subunits alpha(3) and beta(3)) - the catalytic core - and a membrane F(0) domain - the membrane proton channel (subunits c, a, 8, e, f, g, k and j). These two domains are linked by a central stalk (subunits gamma, delta, and epsilon) rotating inside the F1 region and a stationary peripheral stalk (subunits F6, b, d, and OSCP).</text>
</comment>
<comment type="subcellular location">
    <subcellularLocation>
        <location>Mitochondrion</location>
    </subcellularLocation>
    <subcellularLocation>
        <location>Mitochondrion inner membrane</location>
    </subcellularLocation>
</comment>
<comment type="similarity">
    <text evidence="3">Belongs to the eukaryotic ATPase epsilon family.</text>
</comment>
<protein>
    <recommendedName>
        <fullName evidence="3">ATP synthase F(1) complex subunit epsilon, mitochondrial</fullName>
        <shortName>ATPase subunit epsilon</shortName>
    </recommendedName>
    <alternativeName>
        <fullName evidence="2">ATP synthase F1 subunit epsilon</fullName>
    </alternativeName>
</protein>
<name>ATP5E_MOUSE</name>
<keyword id="KW-0007">Acetylation</keyword>
<keyword id="KW-0066">ATP synthesis</keyword>
<keyword id="KW-0139">CF(1)</keyword>
<keyword id="KW-0375">Hydrogen ion transport</keyword>
<keyword id="KW-0406">Ion transport</keyword>
<keyword id="KW-0472">Membrane</keyword>
<keyword id="KW-0496">Mitochondrion</keyword>
<keyword id="KW-0999">Mitochondrion inner membrane</keyword>
<keyword id="KW-1185">Reference proteome</keyword>
<keyword id="KW-0813">Transport</keyword>
<proteinExistence type="evidence at protein level"/>
<evidence type="ECO:0000250" key="1">
    <source>
        <dbReference type="UniProtKB" id="P19483"/>
    </source>
</evidence>
<evidence type="ECO:0000250" key="2">
    <source>
        <dbReference type="UniProtKB" id="P56381"/>
    </source>
</evidence>
<evidence type="ECO:0000305" key="3"/>
<evidence type="ECO:0007744" key="4">
    <source>
    </source>
</evidence>
<evidence type="ECO:0007744" key="5">
    <source>
    </source>
</evidence>